<organism>
    <name type="scientific">Homo sapiens</name>
    <name type="common">Human</name>
    <dbReference type="NCBI Taxonomy" id="9606"/>
    <lineage>
        <taxon>Eukaryota</taxon>
        <taxon>Metazoa</taxon>
        <taxon>Chordata</taxon>
        <taxon>Craniata</taxon>
        <taxon>Vertebrata</taxon>
        <taxon>Euteleostomi</taxon>
        <taxon>Mammalia</taxon>
        <taxon>Eutheria</taxon>
        <taxon>Euarchontoglires</taxon>
        <taxon>Primates</taxon>
        <taxon>Haplorrhini</taxon>
        <taxon>Catarrhini</taxon>
        <taxon>Hominidae</taxon>
        <taxon>Homo</taxon>
    </lineage>
</organism>
<feature type="chain" id="PRO_0000332961" description="Interferon-induced transmembrane protein 10">
    <location>
        <begin position="1"/>
        <end position="228"/>
    </location>
</feature>
<feature type="topological domain" description="Extracellular" evidence="2">
    <location>
        <begin position="1"/>
        <end position="154"/>
    </location>
</feature>
<feature type="transmembrane region" description="Helical" evidence="2">
    <location>
        <begin position="155"/>
        <end position="175"/>
    </location>
</feature>
<feature type="topological domain" description="Cytoplasmic" evidence="2">
    <location>
        <begin position="176"/>
        <end position="200"/>
    </location>
</feature>
<feature type="transmembrane region" description="Helical" evidence="2">
    <location>
        <begin position="201"/>
        <end position="221"/>
    </location>
</feature>
<feature type="topological domain" description="Extracellular" evidence="2">
    <location>
        <begin position="222"/>
        <end position="228"/>
    </location>
</feature>
<feature type="region of interest" description="Disordered" evidence="3">
    <location>
        <begin position="29"/>
        <end position="49"/>
    </location>
</feature>
<feature type="lipid moiety-binding region" description="S-palmitoyl cysteine" evidence="1">
    <location>
        <position position="167"/>
    </location>
</feature>
<feature type="lipid moiety-binding region" description="S-palmitoyl cysteine" evidence="1">
    <location>
        <position position="168"/>
    </location>
</feature>
<sequence>MREGKRGPPCILSFRGTLERVEAQWELEAQGPGQCPAPLGDPASTTDGAQEARVPLDGAFWIPRPPAGSPKGCFACVSKPPALQAPAAPAPEPSASPPMAPTLFPMESKSSKTDSVRAAGAPPACKHLAEKKTMTNPTTVIEVYPDTTEVNDYYLWSIFNFVYLNFCCLGFIALAYSLKVRDKKLLNDLNGAVEDAKTARLFNITSSALAASCIILVFIFLRYPLTDY</sequence>
<dbReference type="EMBL" id="AC068580">
    <property type="status" value="NOT_ANNOTATED_CDS"/>
    <property type="molecule type" value="Genomic_DNA"/>
</dbReference>
<dbReference type="EMBL" id="AK289574">
    <property type="protein sequence ID" value="BAF82263.1"/>
    <property type="status" value="ALT_INIT"/>
    <property type="molecule type" value="mRNA"/>
</dbReference>
<dbReference type="CCDS" id="CCDS53593.2"/>
<dbReference type="RefSeq" id="NP_001164291.2">
    <property type="nucleotide sequence ID" value="NM_001170820.4"/>
</dbReference>
<dbReference type="BioGRID" id="135557">
    <property type="interactions" value="2"/>
</dbReference>
<dbReference type="FunCoup" id="A6NMD0">
    <property type="interactions" value="382"/>
</dbReference>
<dbReference type="STRING" id="9606.ENSP00000344430"/>
<dbReference type="iPTMnet" id="A6NMD0"/>
<dbReference type="PhosphoSitePlus" id="A6NMD0"/>
<dbReference type="BioMuta" id="IFITM10"/>
<dbReference type="MassIVE" id="A6NMD0"/>
<dbReference type="PaxDb" id="9606-ENSP00000344430"/>
<dbReference type="PeptideAtlas" id="A6NMD0"/>
<dbReference type="DNASU" id="402778"/>
<dbReference type="Ensembl" id="ENST00000340134.5">
    <property type="protein sequence ID" value="ENSP00000344430.4"/>
    <property type="gene ID" value="ENSG00000244242.2"/>
</dbReference>
<dbReference type="GeneID" id="402778"/>
<dbReference type="KEGG" id="hsa:402778"/>
<dbReference type="MANE-Select" id="ENST00000340134.5">
    <property type="protein sequence ID" value="ENSP00000344430.4"/>
    <property type="RefSeq nucleotide sequence ID" value="NM_001170820.4"/>
    <property type="RefSeq protein sequence ID" value="NP_001164291.2"/>
</dbReference>
<dbReference type="UCSC" id="uc021qbs.3">
    <property type="organism name" value="human"/>
</dbReference>
<dbReference type="AGR" id="HGNC:40022"/>
<dbReference type="CTD" id="402778"/>
<dbReference type="DisGeNET" id="402778"/>
<dbReference type="GeneCards" id="IFITM10"/>
<dbReference type="HGNC" id="HGNC:40022">
    <property type="gene designation" value="IFITM10"/>
</dbReference>
<dbReference type="HPA" id="ENSG00000244242">
    <property type="expression patterns" value="Tissue enhanced (adrenal gland, bone marrow, retina)"/>
</dbReference>
<dbReference type="MIM" id="618293">
    <property type="type" value="gene"/>
</dbReference>
<dbReference type="neXtProt" id="NX_A6NMD0"/>
<dbReference type="OpenTargets" id="ENSG00000244242"/>
<dbReference type="VEuPathDB" id="HostDB:ENSG00000244242"/>
<dbReference type="eggNOG" id="ENOG502SJYU">
    <property type="taxonomic scope" value="Eukaryota"/>
</dbReference>
<dbReference type="GeneTree" id="ENSGT00950000182857"/>
<dbReference type="HOGENOM" id="CLU_088800_0_0_1"/>
<dbReference type="InParanoid" id="A6NMD0"/>
<dbReference type="OMA" id="CFACISK"/>
<dbReference type="OrthoDB" id="9876655at2759"/>
<dbReference type="PAN-GO" id="A6NMD0">
    <property type="GO annotations" value="1 GO annotation based on evolutionary models"/>
</dbReference>
<dbReference type="PhylomeDB" id="A6NMD0"/>
<dbReference type="TreeFam" id="TF334894"/>
<dbReference type="PathwayCommons" id="A6NMD0"/>
<dbReference type="BioGRID-ORCS" id="402778">
    <property type="hits" value="8 hits in 1135 CRISPR screens"/>
</dbReference>
<dbReference type="ChiTaRS" id="IFITM10">
    <property type="organism name" value="human"/>
</dbReference>
<dbReference type="Pharos" id="A6NMD0">
    <property type="development level" value="Tdark"/>
</dbReference>
<dbReference type="PRO" id="PR:A6NMD0"/>
<dbReference type="Proteomes" id="UP000005640">
    <property type="component" value="Chromosome 11"/>
</dbReference>
<dbReference type="RNAct" id="A6NMD0">
    <property type="molecule type" value="protein"/>
</dbReference>
<dbReference type="Bgee" id="ENSG00000244242">
    <property type="expression patterns" value="Expressed in left adrenal gland cortex and 93 other cell types or tissues"/>
</dbReference>
<dbReference type="ExpressionAtlas" id="A6NMD0">
    <property type="expression patterns" value="baseline and differential"/>
</dbReference>
<dbReference type="GO" id="GO:0005886">
    <property type="term" value="C:plasma membrane"/>
    <property type="evidence" value="ECO:0000318"/>
    <property type="project" value="GO_Central"/>
</dbReference>
<dbReference type="InterPro" id="IPR007593">
    <property type="entry name" value="CD225/Dispanin_fam"/>
</dbReference>
<dbReference type="InterPro" id="IPR051517">
    <property type="entry name" value="IFITM_antiviral_protein"/>
</dbReference>
<dbReference type="PANTHER" id="PTHR13999">
    <property type="entry name" value="INTERFERON INDUCIBLE TRANSMEMBRANE PROTEIN"/>
    <property type="match status" value="1"/>
</dbReference>
<dbReference type="PANTHER" id="PTHR13999:SF9">
    <property type="entry name" value="INTERFERON-INDUCED TRANSMEMBRANE PROTEIN 10"/>
    <property type="match status" value="1"/>
</dbReference>
<dbReference type="Pfam" id="PF04505">
    <property type="entry name" value="CD225"/>
    <property type="match status" value="1"/>
</dbReference>
<protein>
    <recommendedName>
        <fullName>Interferon-induced transmembrane protein 10</fullName>
    </recommendedName>
    <alternativeName>
        <fullName>Dispanin subfamily A member 3</fullName>
        <shortName>DSPA3</shortName>
    </alternativeName>
</protein>
<keyword id="KW-1003">Cell membrane</keyword>
<keyword id="KW-0449">Lipoprotein</keyword>
<keyword id="KW-0472">Membrane</keyword>
<keyword id="KW-0564">Palmitate</keyword>
<keyword id="KW-1267">Proteomics identification</keyword>
<keyword id="KW-1185">Reference proteome</keyword>
<keyword id="KW-0812">Transmembrane</keyword>
<keyword id="KW-1133">Transmembrane helix</keyword>
<reference key="1">
    <citation type="journal article" date="2006" name="Nature">
        <title>Human chromosome 11 DNA sequence and analysis including novel gene identification.</title>
        <authorList>
            <person name="Taylor T.D."/>
            <person name="Noguchi H."/>
            <person name="Totoki Y."/>
            <person name="Toyoda A."/>
            <person name="Kuroki Y."/>
            <person name="Dewar K."/>
            <person name="Lloyd C."/>
            <person name="Itoh T."/>
            <person name="Takeda T."/>
            <person name="Kim D.-W."/>
            <person name="She X."/>
            <person name="Barlow K.F."/>
            <person name="Bloom T."/>
            <person name="Bruford E."/>
            <person name="Chang J.L."/>
            <person name="Cuomo C.A."/>
            <person name="Eichler E."/>
            <person name="FitzGerald M.G."/>
            <person name="Jaffe D.B."/>
            <person name="LaButti K."/>
            <person name="Nicol R."/>
            <person name="Park H.-S."/>
            <person name="Seaman C."/>
            <person name="Sougnez C."/>
            <person name="Yang X."/>
            <person name="Zimmer A.R."/>
            <person name="Zody M.C."/>
            <person name="Birren B.W."/>
            <person name="Nusbaum C."/>
            <person name="Fujiyama A."/>
            <person name="Hattori M."/>
            <person name="Rogers J."/>
            <person name="Lander E.S."/>
            <person name="Sakaki Y."/>
        </authorList>
    </citation>
    <scope>NUCLEOTIDE SEQUENCE [LARGE SCALE GENOMIC DNA]</scope>
</reference>
<reference key="2">
    <citation type="journal article" date="2004" name="Nat. Genet.">
        <title>Complete sequencing and characterization of 21,243 full-length human cDNAs.</title>
        <authorList>
            <person name="Ota T."/>
            <person name="Suzuki Y."/>
            <person name="Nishikawa T."/>
            <person name="Otsuki T."/>
            <person name="Sugiyama T."/>
            <person name="Irie R."/>
            <person name="Wakamatsu A."/>
            <person name="Hayashi K."/>
            <person name="Sato H."/>
            <person name="Nagai K."/>
            <person name="Kimura K."/>
            <person name="Makita H."/>
            <person name="Sekine M."/>
            <person name="Obayashi M."/>
            <person name="Nishi T."/>
            <person name="Shibahara T."/>
            <person name="Tanaka T."/>
            <person name="Ishii S."/>
            <person name="Yamamoto J."/>
            <person name="Saito K."/>
            <person name="Kawai Y."/>
            <person name="Isono Y."/>
            <person name="Nakamura Y."/>
            <person name="Nagahari K."/>
            <person name="Murakami K."/>
            <person name="Yasuda T."/>
            <person name="Iwayanagi T."/>
            <person name="Wagatsuma M."/>
            <person name="Shiratori A."/>
            <person name="Sudo H."/>
            <person name="Hosoiri T."/>
            <person name="Kaku Y."/>
            <person name="Kodaira H."/>
            <person name="Kondo H."/>
            <person name="Sugawara M."/>
            <person name="Takahashi M."/>
            <person name="Kanda K."/>
            <person name="Yokoi T."/>
            <person name="Furuya T."/>
            <person name="Kikkawa E."/>
            <person name="Omura Y."/>
            <person name="Abe K."/>
            <person name="Kamihara K."/>
            <person name="Katsuta N."/>
            <person name="Sato K."/>
            <person name="Tanikawa M."/>
            <person name="Yamazaki M."/>
            <person name="Ninomiya K."/>
            <person name="Ishibashi T."/>
            <person name="Yamashita H."/>
            <person name="Murakawa K."/>
            <person name="Fujimori K."/>
            <person name="Tanai H."/>
            <person name="Kimata M."/>
            <person name="Watanabe M."/>
            <person name="Hiraoka S."/>
            <person name="Chiba Y."/>
            <person name="Ishida S."/>
            <person name="Ono Y."/>
            <person name="Takiguchi S."/>
            <person name="Watanabe S."/>
            <person name="Yosida M."/>
            <person name="Hotuta T."/>
            <person name="Kusano J."/>
            <person name="Kanehori K."/>
            <person name="Takahashi-Fujii A."/>
            <person name="Hara H."/>
            <person name="Tanase T.-O."/>
            <person name="Nomura Y."/>
            <person name="Togiya S."/>
            <person name="Komai F."/>
            <person name="Hara R."/>
            <person name="Takeuchi K."/>
            <person name="Arita M."/>
            <person name="Imose N."/>
            <person name="Musashino K."/>
            <person name="Yuuki H."/>
            <person name="Oshima A."/>
            <person name="Sasaki N."/>
            <person name="Aotsuka S."/>
            <person name="Yoshikawa Y."/>
            <person name="Matsunawa H."/>
            <person name="Ichihara T."/>
            <person name="Shiohata N."/>
            <person name="Sano S."/>
            <person name="Moriya S."/>
            <person name="Momiyama H."/>
            <person name="Satoh N."/>
            <person name="Takami S."/>
            <person name="Terashima Y."/>
            <person name="Suzuki O."/>
            <person name="Nakagawa S."/>
            <person name="Senoh A."/>
            <person name="Mizoguchi H."/>
            <person name="Goto Y."/>
            <person name="Shimizu F."/>
            <person name="Wakebe H."/>
            <person name="Hishigaki H."/>
            <person name="Watanabe T."/>
            <person name="Sugiyama A."/>
            <person name="Takemoto M."/>
            <person name="Kawakami B."/>
            <person name="Yamazaki M."/>
            <person name="Watanabe K."/>
            <person name="Kumagai A."/>
            <person name="Itakura S."/>
            <person name="Fukuzumi Y."/>
            <person name="Fujimori Y."/>
            <person name="Komiyama M."/>
            <person name="Tashiro H."/>
            <person name="Tanigami A."/>
            <person name="Fujiwara T."/>
            <person name="Ono T."/>
            <person name="Yamada K."/>
            <person name="Fujii Y."/>
            <person name="Ozaki K."/>
            <person name="Hirao M."/>
            <person name="Ohmori Y."/>
            <person name="Kawabata A."/>
            <person name="Hikiji T."/>
            <person name="Kobatake N."/>
            <person name="Inagaki H."/>
            <person name="Ikema Y."/>
            <person name="Okamoto S."/>
            <person name="Okitani R."/>
            <person name="Kawakami T."/>
            <person name="Noguchi S."/>
            <person name="Itoh T."/>
            <person name="Shigeta K."/>
            <person name="Senba T."/>
            <person name="Matsumura K."/>
            <person name="Nakajima Y."/>
            <person name="Mizuno T."/>
            <person name="Morinaga M."/>
            <person name="Sasaki M."/>
            <person name="Togashi T."/>
            <person name="Oyama M."/>
            <person name="Hata H."/>
            <person name="Watanabe M."/>
            <person name="Komatsu T."/>
            <person name="Mizushima-Sugano J."/>
            <person name="Satoh T."/>
            <person name="Shirai Y."/>
            <person name="Takahashi Y."/>
            <person name="Nakagawa K."/>
            <person name="Okumura K."/>
            <person name="Nagase T."/>
            <person name="Nomura N."/>
            <person name="Kikuchi H."/>
            <person name="Masuho Y."/>
            <person name="Yamashita R."/>
            <person name="Nakai K."/>
            <person name="Yada T."/>
            <person name="Nakamura Y."/>
            <person name="Ohara O."/>
            <person name="Isogai T."/>
            <person name="Sugano S."/>
        </authorList>
    </citation>
    <scope>NUCLEOTIDE SEQUENCE [LARGE SCALE MRNA] OF 81-228</scope>
    <source>
        <tissue>Cerebellum</tissue>
    </source>
</reference>
<reference key="3">
    <citation type="journal article" date="2012" name="PLoS ONE">
        <title>The dispanins: a novel gene family of ancient origin that contains 14 human members.</title>
        <authorList>
            <person name="Sallman Almen M."/>
            <person name="Bringeland N."/>
            <person name="Fredriksson R."/>
            <person name="Schioth H.B."/>
        </authorList>
    </citation>
    <scope>GENE FAMILY</scope>
</reference>
<accession>A6NMD0</accession>
<accession>A6NEU7</accession>
<name>IFM10_HUMAN</name>
<gene>
    <name type="primary">IFITM10</name>
</gene>
<evidence type="ECO:0000250" key="1"/>
<evidence type="ECO:0000255" key="2"/>
<evidence type="ECO:0000256" key="3">
    <source>
        <dbReference type="SAM" id="MobiDB-lite"/>
    </source>
</evidence>
<evidence type="ECO:0000305" key="4"/>
<comment type="subcellular location">
    <subcellularLocation>
        <location evidence="1">Cell membrane</location>
        <topology evidence="1">Multi-pass membrane protein</topology>
    </subcellularLocation>
</comment>
<comment type="similarity">
    <text evidence="4">Belongs to the CD225/Dispanin family.</text>
</comment>
<comment type="caution">
    <text evidence="4">It is uncertain whether Met-1 or Met-99 is the initiator.</text>
</comment>
<comment type="sequence caution" evidence="4">
    <conflict type="erroneous initiation">
        <sequence resource="EMBL-CDS" id="BAF82263"/>
    </conflict>
    <text>Truncated N-terminus.</text>
</comment>
<proteinExistence type="evidence at protein level"/>